<evidence type="ECO:0000255" key="1">
    <source>
        <dbReference type="HAMAP-Rule" id="MF_00303"/>
    </source>
</evidence>
<feature type="chain" id="PRO_0000256646" description="Trigger factor">
    <location>
        <begin position="1"/>
        <end position="434"/>
    </location>
</feature>
<feature type="domain" description="PPIase FKBP-type" evidence="1">
    <location>
        <begin position="161"/>
        <end position="246"/>
    </location>
</feature>
<gene>
    <name evidence="1" type="primary">tig</name>
    <name type="ordered locus">YPN_0932</name>
    <name type="ORF">YP516_1010</name>
</gene>
<reference key="1">
    <citation type="journal article" date="2006" name="J. Bacteriol.">
        <title>Complete genome sequence of Yersinia pestis strains Antiqua and Nepal516: evidence of gene reduction in an emerging pathogen.</title>
        <authorList>
            <person name="Chain P.S.G."/>
            <person name="Hu P."/>
            <person name="Malfatti S.A."/>
            <person name="Radnedge L."/>
            <person name="Larimer F."/>
            <person name="Vergez L.M."/>
            <person name="Worsham P."/>
            <person name="Chu M.C."/>
            <person name="Andersen G.L."/>
        </authorList>
    </citation>
    <scope>NUCLEOTIDE SEQUENCE [LARGE SCALE GENOMIC DNA]</scope>
    <source>
        <strain>Nepal516</strain>
    </source>
</reference>
<reference key="2">
    <citation type="submission" date="2009-04" db="EMBL/GenBank/DDBJ databases">
        <title>Yersinia pestis Nepal516A whole genome shotgun sequencing project.</title>
        <authorList>
            <person name="Plunkett G. III"/>
            <person name="Anderson B.D."/>
            <person name="Baumler D.J."/>
            <person name="Burland V."/>
            <person name="Cabot E.L."/>
            <person name="Glasner J.D."/>
            <person name="Mau B."/>
            <person name="Neeno-Eckwall E."/>
            <person name="Perna N.T."/>
            <person name="Munk A.C."/>
            <person name="Tapia R."/>
            <person name="Green L.D."/>
            <person name="Rogers Y.C."/>
            <person name="Detter J.C."/>
            <person name="Bruce D.C."/>
            <person name="Brettin T.S."/>
        </authorList>
    </citation>
    <scope>NUCLEOTIDE SEQUENCE [LARGE SCALE GENOMIC DNA]</scope>
    <source>
        <strain>Nepal516</strain>
    </source>
</reference>
<accession>Q1CL66</accession>
<accession>C4GQK8</accession>
<keyword id="KW-0131">Cell cycle</keyword>
<keyword id="KW-0132">Cell division</keyword>
<keyword id="KW-0143">Chaperone</keyword>
<keyword id="KW-0963">Cytoplasm</keyword>
<keyword id="KW-0413">Isomerase</keyword>
<keyword id="KW-0697">Rotamase</keyword>
<comment type="function">
    <text evidence="1">Involved in protein export. Acts as a chaperone by maintaining the newly synthesized protein in an open conformation. Functions as a peptidyl-prolyl cis-trans isomerase.</text>
</comment>
<comment type="catalytic activity">
    <reaction evidence="1">
        <text>[protein]-peptidylproline (omega=180) = [protein]-peptidylproline (omega=0)</text>
        <dbReference type="Rhea" id="RHEA:16237"/>
        <dbReference type="Rhea" id="RHEA-COMP:10747"/>
        <dbReference type="Rhea" id="RHEA-COMP:10748"/>
        <dbReference type="ChEBI" id="CHEBI:83833"/>
        <dbReference type="ChEBI" id="CHEBI:83834"/>
        <dbReference type="EC" id="5.2.1.8"/>
    </reaction>
</comment>
<comment type="subcellular location">
    <subcellularLocation>
        <location>Cytoplasm</location>
    </subcellularLocation>
    <text evidence="1">About half TF is bound to the ribosome near the polypeptide exit tunnel while the other half is free in the cytoplasm.</text>
</comment>
<comment type="domain">
    <text evidence="1">Consists of 3 domains; the N-terminus binds the ribosome, the middle domain has PPIase activity, while the C-terminus has intrinsic chaperone activity on its own.</text>
</comment>
<comment type="similarity">
    <text evidence="1">Belongs to the FKBP-type PPIase family. Tig subfamily.</text>
</comment>
<sequence>MQVSVETTQGLGRRVTITVAADSIEKAVKSELVKAAKNVRIDGFRKGHVPMNIVEQRYGASVRQDVLGDLMQRNFVDAIIKEKINPAGAPNYVPGEYKQGEDFTYSVEFEVYPEVELKDLESIEVEKPVVEVNDADVDTMLETLRKQQATWKETDAAATAEDRATLDFTGSIDGEEFEGGKATDFVLAMGQGRMIPGFEEGVIGHKAGEEFTIDVNFPEDYHAENLKGKSAKFAIVLKKVEVRELPELTEEFIKRFGVADGSLAGLRAEVRKNMERELKGAVRNRVKTQAIDGLVSANNIDVPTALVDGEIDVLRRQAAQRFGGNEKQAAELPRELFEEQAKRRVVVGLLLGEVISQHELKADEDRVKALIEEMASAYEDPQEVIEFYSKNKELMNNMRNVALEEQAVETLLAKAKVTEKPTTFSELMNQTTAA</sequence>
<name>TIG_YERPN</name>
<proteinExistence type="inferred from homology"/>
<protein>
    <recommendedName>
        <fullName evidence="1">Trigger factor</fullName>
        <shortName evidence="1">TF</shortName>
        <ecNumber evidence="1">5.2.1.8</ecNumber>
    </recommendedName>
    <alternativeName>
        <fullName evidence="1">PPIase</fullName>
    </alternativeName>
</protein>
<organism>
    <name type="scientific">Yersinia pestis bv. Antiqua (strain Nepal516)</name>
    <dbReference type="NCBI Taxonomy" id="377628"/>
    <lineage>
        <taxon>Bacteria</taxon>
        <taxon>Pseudomonadati</taxon>
        <taxon>Pseudomonadota</taxon>
        <taxon>Gammaproteobacteria</taxon>
        <taxon>Enterobacterales</taxon>
        <taxon>Yersiniaceae</taxon>
        <taxon>Yersinia</taxon>
    </lineage>
</organism>
<dbReference type="EC" id="5.2.1.8" evidence="1"/>
<dbReference type="EMBL" id="CP000305">
    <property type="protein sequence ID" value="ABG17264.1"/>
    <property type="molecule type" value="Genomic_DNA"/>
</dbReference>
<dbReference type="EMBL" id="ACNQ01000008">
    <property type="protein sequence ID" value="EEO77349.1"/>
    <property type="molecule type" value="Genomic_DNA"/>
</dbReference>
<dbReference type="RefSeq" id="WP_002208643.1">
    <property type="nucleotide sequence ID" value="NZ_ACNQ01000008.1"/>
</dbReference>
<dbReference type="SMR" id="Q1CL66"/>
<dbReference type="GeneID" id="57975553"/>
<dbReference type="KEGG" id="ypn:YPN_0932"/>
<dbReference type="HOGENOM" id="CLU_033058_2_0_6"/>
<dbReference type="Proteomes" id="UP000008936">
    <property type="component" value="Chromosome"/>
</dbReference>
<dbReference type="GO" id="GO:0005737">
    <property type="term" value="C:cytoplasm"/>
    <property type="evidence" value="ECO:0007669"/>
    <property type="project" value="UniProtKB-SubCell"/>
</dbReference>
<dbReference type="GO" id="GO:0003755">
    <property type="term" value="F:peptidyl-prolyl cis-trans isomerase activity"/>
    <property type="evidence" value="ECO:0007669"/>
    <property type="project" value="UniProtKB-UniRule"/>
</dbReference>
<dbReference type="GO" id="GO:0044183">
    <property type="term" value="F:protein folding chaperone"/>
    <property type="evidence" value="ECO:0007669"/>
    <property type="project" value="TreeGrafter"/>
</dbReference>
<dbReference type="GO" id="GO:0043022">
    <property type="term" value="F:ribosome binding"/>
    <property type="evidence" value="ECO:0007669"/>
    <property type="project" value="TreeGrafter"/>
</dbReference>
<dbReference type="GO" id="GO:0051083">
    <property type="term" value="P:'de novo' cotranslational protein folding"/>
    <property type="evidence" value="ECO:0007669"/>
    <property type="project" value="TreeGrafter"/>
</dbReference>
<dbReference type="GO" id="GO:0051301">
    <property type="term" value="P:cell division"/>
    <property type="evidence" value="ECO:0007669"/>
    <property type="project" value="UniProtKB-KW"/>
</dbReference>
<dbReference type="GO" id="GO:0061077">
    <property type="term" value="P:chaperone-mediated protein folding"/>
    <property type="evidence" value="ECO:0007669"/>
    <property type="project" value="TreeGrafter"/>
</dbReference>
<dbReference type="GO" id="GO:0015031">
    <property type="term" value="P:protein transport"/>
    <property type="evidence" value="ECO:0007669"/>
    <property type="project" value="UniProtKB-UniRule"/>
</dbReference>
<dbReference type="GO" id="GO:0043335">
    <property type="term" value="P:protein unfolding"/>
    <property type="evidence" value="ECO:0007669"/>
    <property type="project" value="TreeGrafter"/>
</dbReference>
<dbReference type="FunFam" id="1.10.3120.10:FF:000001">
    <property type="entry name" value="Trigger factor"/>
    <property type="match status" value="1"/>
</dbReference>
<dbReference type="FunFam" id="3.10.50.40:FF:000001">
    <property type="entry name" value="Trigger factor"/>
    <property type="match status" value="1"/>
</dbReference>
<dbReference type="FunFam" id="3.30.70.1050:FF:000001">
    <property type="entry name" value="Trigger factor"/>
    <property type="match status" value="1"/>
</dbReference>
<dbReference type="Gene3D" id="3.10.50.40">
    <property type="match status" value="1"/>
</dbReference>
<dbReference type="Gene3D" id="3.30.70.1050">
    <property type="entry name" value="Trigger factor ribosome-binding domain"/>
    <property type="match status" value="1"/>
</dbReference>
<dbReference type="Gene3D" id="1.10.3120.10">
    <property type="entry name" value="Trigger factor, C-terminal domain"/>
    <property type="match status" value="1"/>
</dbReference>
<dbReference type="HAMAP" id="MF_00303">
    <property type="entry name" value="Trigger_factor_Tig"/>
    <property type="match status" value="1"/>
</dbReference>
<dbReference type="InterPro" id="IPR046357">
    <property type="entry name" value="PPIase_dom_sf"/>
</dbReference>
<dbReference type="InterPro" id="IPR001179">
    <property type="entry name" value="PPIase_FKBP_dom"/>
</dbReference>
<dbReference type="InterPro" id="IPR005215">
    <property type="entry name" value="Trig_fac"/>
</dbReference>
<dbReference type="InterPro" id="IPR008880">
    <property type="entry name" value="Trigger_fac_C"/>
</dbReference>
<dbReference type="InterPro" id="IPR037041">
    <property type="entry name" value="Trigger_fac_C_sf"/>
</dbReference>
<dbReference type="InterPro" id="IPR008881">
    <property type="entry name" value="Trigger_fac_ribosome-bd_bac"/>
</dbReference>
<dbReference type="InterPro" id="IPR036611">
    <property type="entry name" value="Trigger_fac_ribosome-bd_sf"/>
</dbReference>
<dbReference type="InterPro" id="IPR027304">
    <property type="entry name" value="Trigger_fact/SurA_dom_sf"/>
</dbReference>
<dbReference type="NCBIfam" id="TIGR00115">
    <property type="entry name" value="tig"/>
    <property type="match status" value="1"/>
</dbReference>
<dbReference type="PANTHER" id="PTHR30560">
    <property type="entry name" value="TRIGGER FACTOR CHAPERONE AND PEPTIDYL-PROLYL CIS/TRANS ISOMERASE"/>
    <property type="match status" value="1"/>
</dbReference>
<dbReference type="PANTHER" id="PTHR30560:SF3">
    <property type="entry name" value="TRIGGER FACTOR-LIKE PROTEIN TIG, CHLOROPLASTIC"/>
    <property type="match status" value="1"/>
</dbReference>
<dbReference type="Pfam" id="PF00254">
    <property type="entry name" value="FKBP_C"/>
    <property type="match status" value="1"/>
</dbReference>
<dbReference type="Pfam" id="PF05698">
    <property type="entry name" value="Trigger_C"/>
    <property type="match status" value="1"/>
</dbReference>
<dbReference type="Pfam" id="PF05697">
    <property type="entry name" value="Trigger_N"/>
    <property type="match status" value="1"/>
</dbReference>
<dbReference type="PIRSF" id="PIRSF003095">
    <property type="entry name" value="Trigger_factor"/>
    <property type="match status" value="1"/>
</dbReference>
<dbReference type="SUPFAM" id="SSF54534">
    <property type="entry name" value="FKBP-like"/>
    <property type="match status" value="1"/>
</dbReference>
<dbReference type="SUPFAM" id="SSF109998">
    <property type="entry name" value="Triger factor/SurA peptide-binding domain-like"/>
    <property type="match status" value="1"/>
</dbReference>
<dbReference type="SUPFAM" id="SSF102735">
    <property type="entry name" value="Trigger factor ribosome-binding domain"/>
    <property type="match status" value="1"/>
</dbReference>
<dbReference type="PROSITE" id="PS50059">
    <property type="entry name" value="FKBP_PPIASE"/>
    <property type="match status" value="1"/>
</dbReference>